<feature type="chain" id="PRO_0000092983" description="ATP-binding protein SyrD">
    <location>
        <begin position="1"/>
        <end position="566"/>
    </location>
</feature>
<feature type="transmembrane region" description="Helical" evidence="2">
    <location>
        <begin position="24"/>
        <end position="44"/>
    </location>
</feature>
<feature type="transmembrane region" description="Helical" evidence="2">
    <location>
        <begin position="61"/>
        <end position="81"/>
    </location>
</feature>
<feature type="transmembrane region" description="Helical" evidence="2">
    <location>
        <begin position="132"/>
        <end position="152"/>
    </location>
</feature>
<feature type="transmembrane region" description="Helical" evidence="2">
    <location>
        <begin position="158"/>
        <end position="178"/>
    </location>
</feature>
<feature type="transmembrane region" description="Helical" evidence="2">
    <location>
        <begin position="250"/>
        <end position="270"/>
    </location>
</feature>
<feature type="transmembrane region" description="Helical" evidence="2">
    <location>
        <begin position="279"/>
        <end position="299"/>
    </location>
</feature>
<feature type="domain" description="ABC transmembrane type-1" evidence="2">
    <location>
        <begin position="22"/>
        <end position="301"/>
    </location>
</feature>
<feature type="domain" description="ABC transporter" evidence="1">
    <location>
        <begin position="343"/>
        <end position="566"/>
    </location>
</feature>
<feature type="binding site" evidence="1">
    <location>
        <begin position="380"/>
        <end position="387"/>
    </location>
    <ligand>
        <name>ATP</name>
        <dbReference type="ChEBI" id="CHEBI:30616"/>
    </ligand>
</feature>
<accession>P33951</accession>
<proteinExistence type="inferred from homology"/>
<protein>
    <recommendedName>
        <fullName>ATP-binding protein SyrD</fullName>
    </recommendedName>
</protein>
<sequence>MKTKQEKKARPGSIMRLLWSSHPWLTFFTLLTGLISGVASIAVVNVINQAIHEETFQRQSLFWFVGLSVVALLFRNGASLFPAYASMRIMTRLRIALCRKILGTPLEEVDRRGAPNVLTLLTSDIPQLNATLLIMPTILVESAVFLFGIAYLAYLSWVVFAITISLMILGVAMYLLFFMGGMKFTHKVRDEFTAFNEYTHALVFGLKELKLNGIRRRWFSRSAIQESSVRVAKYNYIERLWFTAAENVGQLTLSLLVGCLLFAAPMFAVIDAKTMSASVLAVLYIMGPLVMLVSAMPMLAQGRIACTRLADFGFSINEPHPEPETSDADNVLLLDHKKSWGSIQLKNVHMNYKDPQSSSGFALGPIDLTIHSGELVYIVGGNGCGKSTLAKVFCGLYIPQEGQLLLDGAAVTDDSRGDYRDLFSAVFSDFHLFNRLIGPDEKEHPSTDQAQTYLSTLGLEDKVKIEGLGYSTTTALSYGQQKRLALVCAYLEDRPIYLLDEWAADQDPPFKRFFYEELLPDLKRRGKTILIITHDDQYFQLADRIIKLADGCIVSDVKCAVEGKRA</sequence>
<name>SYRD_PSESY</name>
<keyword id="KW-0045">Antibiotic biosynthesis</keyword>
<keyword id="KW-0067">ATP-binding</keyword>
<keyword id="KW-0997">Cell inner membrane</keyword>
<keyword id="KW-1003">Cell membrane</keyword>
<keyword id="KW-0472">Membrane</keyword>
<keyword id="KW-0547">Nucleotide-binding</keyword>
<keyword id="KW-0812">Transmembrane</keyword>
<keyword id="KW-1133">Transmembrane helix</keyword>
<evidence type="ECO:0000255" key="1">
    <source>
        <dbReference type="PROSITE-ProRule" id="PRU00434"/>
    </source>
</evidence>
<evidence type="ECO:0000255" key="2">
    <source>
        <dbReference type="PROSITE-ProRule" id="PRU00441"/>
    </source>
</evidence>
<evidence type="ECO:0000305" key="3"/>
<gene>
    <name type="primary">syrD</name>
</gene>
<organism>
    <name type="scientific">Pseudomonas syringae pv. syringae</name>
    <dbReference type="NCBI Taxonomy" id="321"/>
    <lineage>
        <taxon>Bacteria</taxon>
        <taxon>Pseudomonadati</taxon>
        <taxon>Pseudomonadota</taxon>
        <taxon>Gammaproteobacteria</taxon>
        <taxon>Pseudomonadales</taxon>
        <taxon>Pseudomonadaceae</taxon>
        <taxon>Pseudomonas</taxon>
        <taxon>Pseudomonas syringae</taxon>
    </lineage>
</organism>
<comment type="function">
    <text>ATP-driven efflux pump necessary for the secretion of syringomycin. May specifically bind syringomycin and translocate it to the periplasmic space. SyrD is also required for full expression of the syrB gene.</text>
</comment>
<comment type="subunit">
    <text evidence="3">Dimer.</text>
</comment>
<comment type="subcellular location">
    <subcellularLocation>
        <location>Cell inner membrane</location>
        <topology>Multi-pass membrane protein</topology>
    </subcellularLocation>
</comment>
<comment type="similarity">
    <text evidence="3">Belongs to the ABC transporter superfamily.</text>
</comment>
<dbReference type="EMBL" id="M97223">
    <property type="protein sequence ID" value="AAA16337.1"/>
    <property type="molecule type" value="Unassigned_DNA"/>
</dbReference>
<dbReference type="PIR" id="S37347">
    <property type="entry name" value="S37347"/>
</dbReference>
<dbReference type="RefSeq" id="WP_003408051.1">
    <property type="nucleotide sequence ID" value="NZ_VBUL01000016.1"/>
</dbReference>
<dbReference type="SMR" id="P33951"/>
<dbReference type="TCDB" id="3.A.1.113.1">
    <property type="family name" value="the atp-binding cassette (abc) superfamily"/>
</dbReference>
<dbReference type="GO" id="GO:0005886">
    <property type="term" value="C:plasma membrane"/>
    <property type="evidence" value="ECO:0007669"/>
    <property type="project" value="UniProtKB-SubCell"/>
</dbReference>
<dbReference type="GO" id="GO:0140359">
    <property type="term" value="F:ABC-type transporter activity"/>
    <property type="evidence" value="ECO:0007669"/>
    <property type="project" value="InterPro"/>
</dbReference>
<dbReference type="GO" id="GO:0005524">
    <property type="term" value="F:ATP binding"/>
    <property type="evidence" value="ECO:0007669"/>
    <property type="project" value="UniProtKB-KW"/>
</dbReference>
<dbReference type="GO" id="GO:0016887">
    <property type="term" value="F:ATP hydrolysis activity"/>
    <property type="evidence" value="ECO:0007669"/>
    <property type="project" value="InterPro"/>
</dbReference>
<dbReference type="GO" id="GO:0034040">
    <property type="term" value="F:ATPase-coupled lipid transmembrane transporter activity"/>
    <property type="evidence" value="ECO:0007669"/>
    <property type="project" value="TreeGrafter"/>
</dbReference>
<dbReference type="GO" id="GO:1904680">
    <property type="term" value="F:peptide transmembrane transporter activity"/>
    <property type="evidence" value="ECO:0007669"/>
    <property type="project" value="InterPro"/>
</dbReference>
<dbReference type="GO" id="GO:0017000">
    <property type="term" value="P:antibiotic biosynthetic process"/>
    <property type="evidence" value="ECO:0007669"/>
    <property type="project" value="UniProtKB-KW"/>
</dbReference>
<dbReference type="GO" id="GO:0015833">
    <property type="term" value="P:peptide transport"/>
    <property type="evidence" value="ECO:0007669"/>
    <property type="project" value="InterPro"/>
</dbReference>
<dbReference type="CDD" id="cd03228">
    <property type="entry name" value="ABCC_MRP_Like"/>
    <property type="match status" value="1"/>
</dbReference>
<dbReference type="Gene3D" id="1.20.1560.10">
    <property type="entry name" value="ABC transporter type 1, transmembrane domain"/>
    <property type="match status" value="1"/>
</dbReference>
<dbReference type="Gene3D" id="3.40.50.300">
    <property type="entry name" value="P-loop containing nucleotide triphosphate hydrolases"/>
    <property type="match status" value="1"/>
</dbReference>
<dbReference type="InterPro" id="IPR003593">
    <property type="entry name" value="AAA+_ATPase"/>
</dbReference>
<dbReference type="InterPro" id="IPR011527">
    <property type="entry name" value="ABC1_TM_dom"/>
</dbReference>
<dbReference type="InterPro" id="IPR036640">
    <property type="entry name" value="ABC1_TM_sf"/>
</dbReference>
<dbReference type="InterPro" id="IPR003439">
    <property type="entry name" value="ABC_transporter-like_ATP-bd"/>
</dbReference>
<dbReference type="InterPro" id="IPR017871">
    <property type="entry name" value="ABC_transporter-like_CS"/>
</dbReference>
<dbReference type="InterPro" id="IPR005898">
    <property type="entry name" value="Cyc_pep_transpt_SyrD/YojI"/>
</dbReference>
<dbReference type="InterPro" id="IPR027417">
    <property type="entry name" value="P-loop_NTPase"/>
</dbReference>
<dbReference type="InterPro" id="IPR039421">
    <property type="entry name" value="Type_1_exporter"/>
</dbReference>
<dbReference type="NCBIfam" id="TIGR01194">
    <property type="entry name" value="cyc_pep_trnsptr"/>
    <property type="match status" value="1"/>
</dbReference>
<dbReference type="PANTHER" id="PTHR24221">
    <property type="entry name" value="ATP-BINDING CASSETTE SUB-FAMILY B"/>
    <property type="match status" value="1"/>
</dbReference>
<dbReference type="PANTHER" id="PTHR24221:SF654">
    <property type="entry name" value="ATP-BINDING CASSETTE SUB-FAMILY B MEMBER 6"/>
    <property type="match status" value="1"/>
</dbReference>
<dbReference type="Pfam" id="PF00664">
    <property type="entry name" value="ABC_membrane"/>
    <property type="match status" value="1"/>
</dbReference>
<dbReference type="Pfam" id="PF00005">
    <property type="entry name" value="ABC_tran"/>
    <property type="match status" value="1"/>
</dbReference>
<dbReference type="SMART" id="SM00382">
    <property type="entry name" value="AAA"/>
    <property type="match status" value="1"/>
</dbReference>
<dbReference type="SUPFAM" id="SSF90123">
    <property type="entry name" value="ABC transporter transmembrane region"/>
    <property type="match status" value="1"/>
</dbReference>
<dbReference type="SUPFAM" id="SSF52540">
    <property type="entry name" value="P-loop containing nucleoside triphosphate hydrolases"/>
    <property type="match status" value="1"/>
</dbReference>
<dbReference type="PROSITE" id="PS50929">
    <property type="entry name" value="ABC_TM1F"/>
    <property type="match status" value="1"/>
</dbReference>
<dbReference type="PROSITE" id="PS00211">
    <property type="entry name" value="ABC_TRANSPORTER_1"/>
    <property type="match status" value="1"/>
</dbReference>
<dbReference type="PROSITE" id="PS50893">
    <property type="entry name" value="ABC_TRANSPORTER_2"/>
    <property type="match status" value="1"/>
</dbReference>
<reference key="1">
    <citation type="journal article" date="1993" name="Mol. Microbiol.">
        <title>SyrD is required for syringomycin production by Pseudomonas syringae pathovar syringae and is related to a family of ATP-binding secretion proteins.</title>
        <authorList>
            <person name="Quigley N.B."/>
            <person name="Mo Y.-Y."/>
            <person name="Gross D.C."/>
        </authorList>
    </citation>
    <scope>NUCLEOTIDE SEQUENCE [GENOMIC DNA]</scope>
    <source>
        <strain>B301D</strain>
    </source>
</reference>